<accession>A7TGI3</accession>
<gene>
    <name type="primary">NMA111</name>
    <name type="ORF">Kpol_1048p20</name>
</gene>
<keyword id="KW-0053">Apoptosis</keyword>
<keyword id="KW-0378">Hydrolase</keyword>
<keyword id="KW-0539">Nucleus</keyword>
<keyword id="KW-0645">Protease</keyword>
<keyword id="KW-1185">Reference proteome</keyword>
<keyword id="KW-0677">Repeat</keyword>
<keyword id="KW-0720">Serine protease</keyword>
<proteinExistence type="inferred from homology"/>
<dbReference type="EC" id="3.4.21.-"/>
<dbReference type="EMBL" id="DS480387">
    <property type="protein sequence ID" value="EDO18590.1"/>
    <property type="molecule type" value="Genomic_DNA"/>
</dbReference>
<dbReference type="RefSeq" id="XP_001646448.1">
    <property type="nucleotide sequence ID" value="XM_001646398.1"/>
</dbReference>
<dbReference type="SMR" id="A7TGI3"/>
<dbReference type="FunCoup" id="A7TGI3">
    <property type="interactions" value="143"/>
</dbReference>
<dbReference type="STRING" id="436907.A7TGI3"/>
<dbReference type="GeneID" id="5546890"/>
<dbReference type="KEGG" id="vpo:Kpol_1048p20"/>
<dbReference type="eggNOG" id="KOG1421">
    <property type="taxonomic scope" value="Eukaryota"/>
</dbReference>
<dbReference type="HOGENOM" id="CLU_003212_0_0_1"/>
<dbReference type="InParanoid" id="A7TGI3"/>
<dbReference type="OMA" id="FWGHCVF"/>
<dbReference type="OrthoDB" id="4217619at2759"/>
<dbReference type="PhylomeDB" id="A7TGI3"/>
<dbReference type="Proteomes" id="UP000000267">
    <property type="component" value="Unassembled WGS sequence"/>
</dbReference>
<dbReference type="GO" id="GO:0005634">
    <property type="term" value="C:nucleus"/>
    <property type="evidence" value="ECO:0007669"/>
    <property type="project" value="UniProtKB-SubCell"/>
</dbReference>
<dbReference type="GO" id="GO:0004252">
    <property type="term" value="F:serine-type endopeptidase activity"/>
    <property type="evidence" value="ECO:0007669"/>
    <property type="project" value="EnsemblFungi"/>
</dbReference>
<dbReference type="GO" id="GO:0006915">
    <property type="term" value="P:apoptotic process"/>
    <property type="evidence" value="ECO:0007669"/>
    <property type="project" value="UniProtKB-KW"/>
</dbReference>
<dbReference type="GO" id="GO:0034605">
    <property type="term" value="P:cellular response to heat"/>
    <property type="evidence" value="ECO:0007669"/>
    <property type="project" value="EnsemblFungi"/>
</dbReference>
<dbReference type="GO" id="GO:0006629">
    <property type="term" value="P:lipid metabolic process"/>
    <property type="evidence" value="ECO:0007669"/>
    <property type="project" value="EnsemblFungi"/>
</dbReference>
<dbReference type="GO" id="GO:0120174">
    <property type="term" value="P:stress-induced homeostatically regulated protein degradation pathway"/>
    <property type="evidence" value="ECO:0007669"/>
    <property type="project" value="EnsemblFungi"/>
</dbReference>
<dbReference type="CDD" id="cd06786">
    <property type="entry name" value="cpPDZ1_ScNma111-like"/>
    <property type="match status" value="1"/>
</dbReference>
<dbReference type="CDD" id="cd10827">
    <property type="entry name" value="cpPDZ3_ScNma111-like"/>
    <property type="match status" value="1"/>
</dbReference>
<dbReference type="CDD" id="cd06719">
    <property type="entry name" value="PDZ2-4_Nma111p-like"/>
    <property type="match status" value="1"/>
</dbReference>
<dbReference type="FunFam" id="2.40.10.120:FF:000013">
    <property type="entry name" value="Pro-apoptotic serine protease NMA111"/>
    <property type="match status" value="1"/>
</dbReference>
<dbReference type="Gene3D" id="2.30.42.10">
    <property type="match status" value="2"/>
</dbReference>
<dbReference type="Gene3D" id="2.40.10.120">
    <property type="match status" value="1"/>
</dbReference>
<dbReference type="Gene3D" id="2.40.10.10">
    <property type="entry name" value="Trypsin-like serine proteases"/>
    <property type="match status" value="2"/>
</dbReference>
<dbReference type="InterPro" id="IPR001478">
    <property type="entry name" value="PDZ"/>
</dbReference>
<dbReference type="InterPro" id="IPR025926">
    <property type="entry name" value="PDZ-like_dom"/>
</dbReference>
<dbReference type="InterPro" id="IPR036034">
    <property type="entry name" value="PDZ_sf"/>
</dbReference>
<dbReference type="InterPro" id="IPR009003">
    <property type="entry name" value="Peptidase_S1_PA"/>
</dbReference>
<dbReference type="InterPro" id="IPR043504">
    <property type="entry name" value="Peptidase_S1_PA_chymotrypsin"/>
</dbReference>
<dbReference type="InterPro" id="IPR001940">
    <property type="entry name" value="Peptidase_S1C"/>
</dbReference>
<dbReference type="PANTHER" id="PTHR46366">
    <property type="entry name" value="PRO-APOPTOTIC SERINE PROTEASE NMA111"/>
    <property type="match status" value="1"/>
</dbReference>
<dbReference type="PANTHER" id="PTHR46366:SF8">
    <property type="entry name" value="PRO-APOPTOTIC SERINE PROTEASE NMA111"/>
    <property type="match status" value="1"/>
</dbReference>
<dbReference type="Pfam" id="PF12812">
    <property type="entry name" value="PDZ_1"/>
    <property type="match status" value="2"/>
</dbReference>
<dbReference type="Pfam" id="PF13365">
    <property type="entry name" value="Trypsin_2"/>
    <property type="match status" value="1"/>
</dbReference>
<dbReference type="PRINTS" id="PR00834">
    <property type="entry name" value="PROTEASES2C"/>
</dbReference>
<dbReference type="SMART" id="SM00228">
    <property type="entry name" value="PDZ"/>
    <property type="match status" value="2"/>
</dbReference>
<dbReference type="SUPFAM" id="SSF50156">
    <property type="entry name" value="PDZ domain-like"/>
    <property type="match status" value="3"/>
</dbReference>
<dbReference type="SUPFAM" id="SSF50494">
    <property type="entry name" value="Trypsin-like serine proteases"/>
    <property type="match status" value="2"/>
</dbReference>
<evidence type="ECO:0000250" key="1"/>
<evidence type="ECO:0000255" key="2"/>
<evidence type="ECO:0000256" key="3">
    <source>
        <dbReference type="SAM" id="MobiDB-lite"/>
    </source>
</evidence>
<evidence type="ECO:0000305" key="4"/>
<name>NM111_VANPO</name>
<reference key="1">
    <citation type="journal article" date="2007" name="Proc. Natl. Acad. Sci. U.S.A.">
        <title>Independent sorting-out of thousands of duplicated gene pairs in two yeast species descended from a whole-genome duplication.</title>
        <authorList>
            <person name="Scannell D.R."/>
            <person name="Frank A.C."/>
            <person name="Conant G.C."/>
            <person name="Byrne K.P."/>
            <person name="Woolfit M."/>
            <person name="Wolfe K.H."/>
        </authorList>
    </citation>
    <scope>NUCLEOTIDE SEQUENCE [LARGE SCALE GENOMIC DNA]</scope>
    <source>
        <strain>ATCC 22028 / DSM 70294 / BCRC 21397 / CBS 2163 / NBRC 10782 / NRRL Y-8283 / UCD 57-17</strain>
    </source>
</reference>
<feature type="chain" id="PRO_0000320361" description="Pro-apoptotic serine protease NMA111">
    <location>
        <begin position="1"/>
        <end position="990"/>
    </location>
</feature>
<feature type="domain" description="PDZ 1">
    <location>
        <begin position="290"/>
        <end position="368"/>
    </location>
</feature>
<feature type="domain" description="PDZ 2">
    <location>
        <begin position="758"/>
        <end position="843"/>
    </location>
</feature>
<feature type="region of interest" description="Disordered" evidence="3">
    <location>
        <begin position="1"/>
        <end position="32"/>
    </location>
</feature>
<feature type="region of interest" description="Serine protease">
    <location>
        <begin position="73"/>
        <end position="263"/>
    </location>
</feature>
<feature type="active site" description="Charge relay system" evidence="2">
    <location>
        <position position="111"/>
    </location>
</feature>
<feature type="active site" description="Charge relay system" evidence="2">
    <location>
        <position position="142"/>
    </location>
</feature>
<feature type="active site" description="Charge relay system" evidence="2">
    <location>
        <position position="225"/>
    </location>
</feature>
<organism>
    <name type="scientific">Vanderwaltozyma polyspora (strain ATCC 22028 / DSM 70294 / BCRC 21397 / CBS 2163 / NBRC 10782 / NRRL Y-8283 / UCD 57-17)</name>
    <name type="common">Kluyveromyces polysporus</name>
    <dbReference type="NCBI Taxonomy" id="436907"/>
    <lineage>
        <taxon>Eukaryota</taxon>
        <taxon>Fungi</taxon>
        <taxon>Dikarya</taxon>
        <taxon>Ascomycota</taxon>
        <taxon>Saccharomycotina</taxon>
        <taxon>Saccharomycetes</taxon>
        <taxon>Saccharomycetales</taxon>
        <taxon>Saccharomycetaceae</taxon>
        <taxon>Vanderwaltozyma</taxon>
    </lineage>
</organism>
<comment type="function">
    <text evidence="1">Nuclear serine protease which mediates apoptosis.</text>
</comment>
<comment type="subcellular location">
    <subcellularLocation>
        <location evidence="1">Nucleus</location>
    </subcellularLocation>
</comment>
<comment type="similarity">
    <text evidence="4">Belongs to the peptidase S1C family.</text>
</comment>
<sequence length="990" mass="110302">MSVTNSNRKRSLSEVSEGSDPEAPAKTRNSYTTDEIVMVEEVDSEIPVNISSYGDAETYLKWQNTIAKVVKSVVSIHFSQVAPFDSDNAVVSQATGFVVDASLGIILTNRHVVGPGPFVGYAVFDNHEECDVTPIYRDPVHDFGFLKFDPTKIKYMNIQALELKPSLAKVGSEIRVVGNDAGEKLSILSGFISRLDRNAPDYGELTYNDFNTEYIQAAAAASGGSSGSPVVNSDGYAVALQAGGSTEASTDFFLPLDRILRALKCLQSNKPITRGTIQLQWLLKPFDECRRLGLTADRESQARAQFPDKIGLLVAETILREGPSDIKIKEGDTLISINGELISSFIQVDDILDESIGKEIEIIIQRGGIEHTVKCEVGDLHSITPDRYVEVCGATFHELSYQMARFYGMPVRGVFISSASGSFNIDANERVGWIVDSIDNKETPNLDTFIEVMKTIPDRQRVTLRYHHLTDQHTIHVTSIYIDRHWCSEFRLYKRNDVTGIWDYENVAEPIKAEELKPHAAKFIDIPIDIPEIATLSHSLCMVSTVSAIPLDSLPVENVKTSGLVIDAEQGYIIVSRRAVPHDCLDVFVTFADSVMIPASIVFLHPTKNYAIIKYDINLVNANIITPKLSNTPMKRGDRTRFIGFTHNNRLVTSETSVTDISSISIPSNIIPRYRATNLEAISIDCNVSTKCNSGILTDNDGTIRALWLSFLGERQDNKDKIYLMSLDITDCKEVIELLKEGKKPKVSIIDAGFGAISILTARIRGVPEEWIKKMELQSENRLQFISVSRVSFTEEPVKLQTGDVILAVNDKLVTEMSQLDGVVSTADDEESQTLRFKVVREGKIIDLNIKTIYVKETSQIAVFSGSILQPPHHAVWQSMMNIPSGVYCTFRGESSPALQFGISATNFITHVNETETPDLDTFLKVIKQIPDNTYCKMRLMTFDNVPFAISLKTNYHYFPTTELKKNIESGKWIENELNKTEEKKIIKSD</sequence>
<protein>
    <recommendedName>
        <fullName>Pro-apoptotic serine protease NMA111</fullName>
        <ecNumber>3.4.21.-</ecNumber>
    </recommendedName>
</protein>